<gene>
    <name evidence="21" type="primary">GAS6</name>
    <name type="synonym">AXLLG</name>
</gene>
<dbReference type="EMBL" id="L13720">
    <property type="protein sequence ID" value="AAA58494.1"/>
    <property type="molecule type" value="mRNA"/>
</dbReference>
<dbReference type="EMBL" id="AY256843">
    <property type="protein sequence ID" value="AAO84057.1"/>
    <property type="molecule type" value="Genomic_DNA"/>
</dbReference>
<dbReference type="EMBL" id="AY256830">
    <property type="protein sequence ID" value="AAO84057.1"/>
    <property type="status" value="JOINED"/>
    <property type="molecule type" value="Genomic_DNA"/>
</dbReference>
<dbReference type="EMBL" id="AY256831">
    <property type="protein sequence ID" value="AAO84057.1"/>
    <property type="status" value="JOINED"/>
    <property type="molecule type" value="Genomic_DNA"/>
</dbReference>
<dbReference type="EMBL" id="AY256832">
    <property type="protein sequence ID" value="AAO84057.1"/>
    <property type="status" value="JOINED"/>
    <property type="molecule type" value="Genomic_DNA"/>
</dbReference>
<dbReference type="EMBL" id="AY256833">
    <property type="protein sequence ID" value="AAO84057.1"/>
    <property type="status" value="JOINED"/>
    <property type="molecule type" value="Genomic_DNA"/>
</dbReference>
<dbReference type="EMBL" id="AY256834">
    <property type="protein sequence ID" value="AAO84057.1"/>
    <property type="status" value="JOINED"/>
    <property type="molecule type" value="Genomic_DNA"/>
</dbReference>
<dbReference type="EMBL" id="AY256835">
    <property type="protein sequence ID" value="AAO84057.1"/>
    <property type="status" value="JOINED"/>
    <property type="molecule type" value="Genomic_DNA"/>
</dbReference>
<dbReference type="EMBL" id="AY256836">
    <property type="protein sequence ID" value="AAO84057.1"/>
    <property type="status" value="JOINED"/>
    <property type="molecule type" value="Genomic_DNA"/>
</dbReference>
<dbReference type="EMBL" id="AY256837">
    <property type="protein sequence ID" value="AAO84057.1"/>
    <property type="status" value="JOINED"/>
    <property type="molecule type" value="Genomic_DNA"/>
</dbReference>
<dbReference type="EMBL" id="AY256838">
    <property type="protein sequence ID" value="AAO84057.1"/>
    <property type="status" value="JOINED"/>
    <property type="molecule type" value="Genomic_DNA"/>
</dbReference>
<dbReference type="EMBL" id="AY256839">
    <property type="protein sequence ID" value="AAO84057.1"/>
    <property type="status" value="JOINED"/>
    <property type="molecule type" value="Genomic_DNA"/>
</dbReference>
<dbReference type="EMBL" id="AY256840">
    <property type="protein sequence ID" value="AAO84057.1"/>
    <property type="status" value="JOINED"/>
    <property type="molecule type" value="Genomic_DNA"/>
</dbReference>
<dbReference type="EMBL" id="AY256841">
    <property type="protein sequence ID" value="AAO84057.1"/>
    <property type="status" value="JOINED"/>
    <property type="molecule type" value="Genomic_DNA"/>
</dbReference>
<dbReference type="EMBL" id="AY256842">
    <property type="protein sequence ID" value="AAO84057.1"/>
    <property type="status" value="JOINED"/>
    <property type="molecule type" value="Genomic_DNA"/>
</dbReference>
<dbReference type="EMBL" id="AK092028">
    <property type="protein sequence ID" value="BAG52469.1"/>
    <property type="molecule type" value="mRNA"/>
</dbReference>
<dbReference type="EMBL" id="AK122969">
    <property type="protein sequence ID" value="BAG53826.1"/>
    <property type="molecule type" value="mRNA"/>
</dbReference>
<dbReference type="EMBL" id="AK126533">
    <property type="protein sequence ID" value="BAC86580.1"/>
    <property type="molecule type" value="mRNA"/>
</dbReference>
<dbReference type="EMBL" id="AK290803">
    <property type="protein sequence ID" value="BAF83492.1"/>
    <property type="molecule type" value="mRNA"/>
</dbReference>
<dbReference type="EMBL" id="EF631974">
    <property type="protein sequence ID" value="ABR09277.1"/>
    <property type="molecule type" value="Genomic_DNA"/>
</dbReference>
<dbReference type="EMBL" id="BX072579">
    <property type="status" value="NOT_ANNOTATED_CDS"/>
    <property type="molecule type" value="Genomic_DNA"/>
</dbReference>
<dbReference type="EMBL" id="BC038984">
    <property type="protein sequence ID" value="AAH38984.1"/>
    <property type="molecule type" value="mRNA"/>
</dbReference>
<dbReference type="EMBL" id="AY170372">
    <property type="protein sequence ID" value="AAO41859.1"/>
    <property type="molecule type" value="Genomic_DNA"/>
</dbReference>
<dbReference type="EMBL" id="BK001240">
    <property type="protein sequence ID" value="DAA01155.1"/>
    <property type="molecule type" value="Genomic_DNA"/>
</dbReference>
<dbReference type="CCDS" id="CCDS45072.1">
    <molecule id="Q14393-2"/>
</dbReference>
<dbReference type="PIR" id="B48089">
    <property type="entry name" value="B48089"/>
</dbReference>
<dbReference type="RefSeq" id="NP_000811.1">
    <molecule id="Q14393-2"/>
    <property type="nucleotide sequence ID" value="NM_000820.4"/>
</dbReference>
<dbReference type="PDB" id="1H30">
    <property type="method" value="X-ray"/>
    <property type="resolution" value="2.20 A"/>
    <property type="chains" value="A=261-678"/>
</dbReference>
<dbReference type="PDB" id="2C5D">
    <property type="method" value="X-ray"/>
    <property type="resolution" value="3.30 A"/>
    <property type="chains" value="A/B=261-678"/>
</dbReference>
<dbReference type="PDB" id="4RA0">
    <property type="method" value="X-ray"/>
    <property type="resolution" value="3.07 A"/>
    <property type="chains" value="A/B=279-678"/>
</dbReference>
<dbReference type="PDB" id="5VXZ">
    <property type="method" value="X-ray"/>
    <property type="resolution" value="2.30 A"/>
    <property type="chains" value="A/B=281-675"/>
</dbReference>
<dbReference type="PDBsum" id="1H30"/>
<dbReference type="PDBsum" id="2C5D"/>
<dbReference type="PDBsum" id="4RA0"/>
<dbReference type="PDBsum" id="5VXZ"/>
<dbReference type="SMR" id="Q14393"/>
<dbReference type="BioGRID" id="108891">
    <property type="interactions" value="140"/>
</dbReference>
<dbReference type="FunCoup" id="Q14393">
    <property type="interactions" value="717"/>
</dbReference>
<dbReference type="IntAct" id="Q14393">
    <property type="interactions" value="76"/>
</dbReference>
<dbReference type="MINT" id="Q14393"/>
<dbReference type="STRING" id="9606.ENSP00000331831"/>
<dbReference type="BindingDB" id="Q14393"/>
<dbReference type="ChEMBL" id="CHEMBL4804247"/>
<dbReference type="GlyCosmos" id="Q14393">
    <property type="glycosylation" value="1 site, No reported glycans"/>
</dbReference>
<dbReference type="GlyGen" id="Q14393">
    <property type="glycosylation" value="2 sites, 1 N-linked glycan (1 site), 1 O-linked glycan (1 site)"/>
</dbReference>
<dbReference type="iPTMnet" id="Q14393"/>
<dbReference type="PhosphoSitePlus" id="Q14393"/>
<dbReference type="BioMuta" id="GAS6"/>
<dbReference type="DMDM" id="48427995"/>
<dbReference type="jPOST" id="Q14393"/>
<dbReference type="MassIVE" id="Q14393"/>
<dbReference type="PaxDb" id="9606-ENSP00000331831"/>
<dbReference type="PeptideAtlas" id="Q14393"/>
<dbReference type="ProteomicsDB" id="19251"/>
<dbReference type="ProteomicsDB" id="59975">
    <molecule id="Q14393-1"/>
</dbReference>
<dbReference type="ProteomicsDB" id="59976">
    <molecule id="Q14393-2"/>
</dbReference>
<dbReference type="ProteomicsDB" id="59977">
    <molecule id="Q14393-3"/>
</dbReference>
<dbReference type="ProteomicsDB" id="59978">
    <molecule id="Q14393-4"/>
</dbReference>
<dbReference type="Pumba" id="Q14393"/>
<dbReference type="Antibodypedia" id="1292">
    <property type="antibodies" value="422 antibodies from 33 providers"/>
</dbReference>
<dbReference type="DNASU" id="2621"/>
<dbReference type="Ensembl" id="ENST00000327773.7">
    <molecule id="Q14393-2"/>
    <property type="protein sequence ID" value="ENSP00000331831.6"/>
    <property type="gene ID" value="ENSG00000183087.15"/>
</dbReference>
<dbReference type="GeneID" id="2621"/>
<dbReference type="KEGG" id="hsa:2621"/>
<dbReference type="MANE-Select" id="ENST00000327773.7">
    <property type="protein sequence ID" value="ENSP00000331831.6"/>
    <property type="RefSeq nucleotide sequence ID" value="NM_000820.4"/>
    <property type="RefSeq protein sequence ID" value="NP_000811.1"/>
</dbReference>
<dbReference type="UCSC" id="uc001vud.4">
    <molecule id="Q14393-2"/>
    <property type="organism name" value="human"/>
</dbReference>
<dbReference type="AGR" id="HGNC:4168"/>
<dbReference type="CTD" id="2621"/>
<dbReference type="DisGeNET" id="2621"/>
<dbReference type="GeneCards" id="GAS6"/>
<dbReference type="HGNC" id="HGNC:4168">
    <property type="gene designation" value="GAS6"/>
</dbReference>
<dbReference type="HPA" id="ENSG00000183087">
    <property type="expression patterns" value="Low tissue specificity"/>
</dbReference>
<dbReference type="MIM" id="600441">
    <property type="type" value="gene"/>
</dbReference>
<dbReference type="neXtProt" id="NX_Q14393"/>
<dbReference type="OpenTargets" id="ENSG00000183087"/>
<dbReference type="PharmGKB" id="PA28582"/>
<dbReference type="VEuPathDB" id="HostDB:ENSG00000183087"/>
<dbReference type="eggNOG" id="ENOG502QT2N">
    <property type="taxonomic scope" value="Eukaryota"/>
</dbReference>
<dbReference type="GeneTree" id="ENSGT00940000161271"/>
<dbReference type="HOGENOM" id="CLU_026236_0_0_1"/>
<dbReference type="InParanoid" id="Q14393"/>
<dbReference type="OMA" id="PIINHGM"/>
<dbReference type="OrthoDB" id="4062651at2759"/>
<dbReference type="PAN-GO" id="Q14393">
    <property type="GO annotations" value="2 GO annotations based on evolutionary models"/>
</dbReference>
<dbReference type="PhylomeDB" id="Q14393"/>
<dbReference type="TreeFam" id="TF352157"/>
<dbReference type="PathwayCommons" id="Q14393"/>
<dbReference type="Reactome" id="R-HSA-114608">
    <property type="pathway name" value="Platelet degranulation"/>
</dbReference>
<dbReference type="Reactome" id="R-HSA-159740">
    <property type="pathway name" value="Gamma-carboxylation of protein precursors"/>
</dbReference>
<dbReference type="Reactome" id="R-HSA-159763">
    <property type="pathway name" value="Transport of gamma-carboxylated protein precursors from the endoplasmic reticulum to the Golgi apparatus"/>
</dbReference>
<dbReference type="Reactome" id="R-HSA-159782">
    <property type="pathway name" value="Removal of aminoterminal propeptides from gamma-carboxylated proteins"/>
</dbReference>
<dbReference type="Reactome" id="R-HSA-202733">
    <property type="pathway name" value="Cell surface interactions at the vascular wall"/>
</dbReference>
<dbReference type="Reactome" id="R-HSA-381426">
    <property type="pathway name" value="Regulation of Insulin-like Growth Factor (IGF) transport and uptake by Insulin-like Growth Factor Binding Proteins (IGFBPs)"/>
</dbReference>
<dbReference type="Reactome" id="R-HSA-8957275">
    <property type="pathway name" value="Post-translational protein phosphorylation"/>
</dbReference>
<dbReference type="SignaLink" id="Q14393"/>
<dbReference type="SIGNOR" id="Q14393"/>
<dbReference type="BioGRID-ORCS" id="2621">
    <property type="hits" value="14 hits in 1160 CRISPR screens"/>
</dbReference>
<dbReference type="ChiTaRS" id="GAS6">
    <property type="organism name" value="human"/>
</dbReference>
<dbReference type="EvolutionaryTrace" id="Q14393"/>
<dbReference type="GeneWiki" id="GAS6"/>
<dbReference type="GenomeRNAi" id="2621"/>
<dbReference type="Pharos" id="Q14393">
    <property type="development level" value="Tbio"/>
</dbReference>
<dbReference type="PRO" id="PR:Q14393"/>
<dbReference type="Proteomes" id="UP000005640">
    <property type="component" value="Chromosome 13"/>
</dbReference>
<dbReference type="RNAct" id="Q14393">
    <property type="molecule type" value="protein"/>
</dbReference>
<dbReference type="Bgee" id="ENSG00000183087">
    <property type="expression patterns" value="Expressed in ascending aorta and 199 other cell types or tissues"/>
</dbReference>
<dbReference type="GO" id="GO:0005737">
    <property type="term" value="C:cytoplasm"/>
    <property type="evidence" value="ECO:0000314"/>
    <property type="project" value="UniProtKB"/>
</dbReference>
<dbReference type="GO" id="GO:0005788">
    <property type="term" value="C:endoplasmic reticulum lumen"/>
    <property type="evidence" value="ECO:0000304"/>
    <property type="project" value="Reactome"/>
</dbReference>
<dbReference type="GO" id="GO:0070062">
    <property type="term" value="C:extracellular exosome"/>
    <property type="evidence" value="ECO:0007005"/>
    <property type="project" value="UniProtKB"/>
</dbReference>
<dbReference type="GO" id="GO:0005576">
    <property type="term" value="C:extracellular region"/>
    <property type="evidence" value="ECO:0000304"/>
    <property type="project" value="Reactome"/>
</dbReference>
<dbReference type="GO" id="GO:0005615">
    <property type="term" value="C:extracellular space"/>
    <property type="evidence" value="ECO:0000314"/>
    <property type="project" value="UniProtKB"/>
</dbReference>
<dbReference type="GO" id="GO:0005796">
    <property type="term" value="C:Golgi lumen"/>
    <property type="evidence" value="ECO:0000304"/>
    <property type="project" value="Reactome"/>
</dbReference>
<dbReference type="GO" id="GO:0031093">
    <property type="term" value="C:platelet alpha granule lumen"/>
    <property type="evidence" value="ECO:0000304"/>
    <property type="project" value="Reactome"/>
</dbReference>
<dbReference type="GO" id="GO:0005509">
    <property type="term" value="F:calcium ion binding"/>
    <property type="evidence" value="ECO:0007669"/>
    <property type="project" value="InterPro"/>
</dbReference>
<dbReference type="GO" id="GO:0043027">
    <property type="term" value="F:cysteine-type endopeptidase inhibitor activity involved in apoptotic process"/>
    <property type="evidence" value="ECO:0000314"/>
    <property type="project" value="UniProtKB"/>
</dbReference>
<dbReference type="GO" id="GO:0001786">
    <property type="term" value="F:phosphatidylserine binding"/>
    <property type="evidence" value="ECO:0000314"/>
    <property type="project" value="UniProtKB"/>
</dbReference>
<dbReference type="GO" id="GO:0030674">
    <property type="term" value="F:protein-macromolecule adaptor activity"/>
    <property type="evidence" value="ECO:0000314"/>
    <property type="project" value="UniProtKB"/>
</dbReference>
<dbReference type="GO" id="GO:0048018">
    <property type="term" value="F:receptor ligand activity"/>
    <property type="evidence" value="ECO:0000314"/>
    <property type="project" value="UniProtKB"/>
</dbReference>
<dbReference type="GO" id="GO:0030971">
    <property type="term" value="F:receptor tyrosine kinase binding"/>
    <property type="evidence" value="ECO:0000353"/>
    <property type="project" value="UniProtKB"/>
</dbReference>
<dbReference type="GO" id="GO:0005102">
    <property type="term" value="F:signaling receptor binding"/>
    <property type="evidence" value="ECO:0000314"/>
    <property type="project" value="UniProtKB"/>
</dbReference>
<dbReference type="GO" id="GO:0032148">
    <property type="term" value="P:activation of protein kinase B activity"/>
    <property type="evidence" value="ECO:0000250"/>
    <property type="project" value="UniProtKB"/>
</dbReference>
<dbReference type="GO" id="GO:0031100">
    <property type="term" value="P:animal organ regeneration"/>
    <property type="evidence" value="ECO:0007669"/>
    <property type="project" value="Ensembl"/>
</dbReference>
<dbReference type="GO" id="GO:0043277">
    <property type="term" value="P:apoptotic cell clearance"/>
    <property type="evidence" value="ECO:0000314"/>
    <property type="project" value="UniProtKB"/>
</dbReference>
<dbReference type="GO" id="GO:0035754">
    <property type="term" value="P:B cell chemotaxis"/>
    <property type="evidence" value="ECO:0000314"/>
    <property type="project" value="UniProtKB"/>
</dbReference>
<dbReference type="GO" id="GO:0007596">
    <property type="term" value="P:blood coagulation"/>
    <property type="evidence" value="ECO:0007669"/>
    <property type="project" value="Ensembl"/>
</dbReference>
<dbReference type="GO" id="GO:0070588">
    <property type="term" value="P:calcium ion transmembrane transport"/>
    <property type="evidence" value="ECO:0000314"/>
    <property type="project" value="UniProtKB"/>
</dbReference>
<dbReference type="GO" id="GO:0007166">
    <property type="term" value="P:cell surface receptor signaling pathway"/>
    <property type="evidence" value="ECO:0000314"/>
    <property type="project" value="UniProtKB"/>
</dbReference>
<dbReference type="GO" id="GO:0031589">
    <property type="term" value="P:cell-substrate adhesion"/>
    <property type="evidence" value="ECO:0007669"/>
    <property type="project" value="Ensembl"/>
</dbReference>
<dbReference type="GO" id="GO:0071333">
    <property type="term" value="P:cellular response to glucose stimulus"/>
    <property type="evidence" value="ECO:0000250"/>
    <property type="project" value="UniProtKB"/>
</dbReference>
<dbReference type="GO" id="GO:0071363">
    <property type="term" value="P:cellular response to growth factor stimulus"/>
    <property type="evidence" value="ECO:0007669"/>
    <property type="project" value="Ensembl"/>
</dbReference>
<dbReference type="GO" id="GO:0035457">
    <property type="term" value="P:cellular response to interferon-alpha"/>
    <property type="evidence" value="ECO:0000314"/>
    <property type="project" value="UniProtKB"/>
</dbReference>
<dbReference type="GO" id="GO:0009267">
    <property type="term" value="P:cellular response to starvation"/>
    <property type="evidence" value="ECO:0007669"/>
    <property type="project" value="Ensembl"/>
</dbReference>
<dbReference type="GO" id="GO:0071307">
    <property type="term" value="P:cellular response to vitamin K"/>
    <property type="evidence" value="ECO:0000314"/>
    <property type="project" value="UniProtKB"/>
</dbReference>
<dbReference type="GO" id="GO:0071466">
    <property type="term" value="P:cellular response to xenobiotic stimulus"/>
    <property type="evidence" value="ECO:0000314"/>
    <property type="project" value="UniProtKB"/>
</dbReference>
<dbReference type="GO" id="GO:0097028">
    <property type="term" value="P:dendritic cell differentiation"/>
    <property type="evidence" value="ECO:0000270"/>
    <property type="project" value="UniProtKB"/>
</dbReference>
<dbReference type="GO" id="GO:0007167">
    <property type="term" value="P:enzyme-linked receptor protein signaling pathway"/>
    <property type="evidence" value="ECO:0007669"/>
    <property type="project" value="Ensembl"/>
</dbReference>
<dbReference type="GO" id="GO:0085029">
    <property type="term" value="P:extracellular matrix assembly"/>
    <property type="evidence" value="ECO:0000250"/>
    <property type="project" value="UniProtKB"/>
</dbReference>
<dbReference type="GO" id="GO:0044346">
    <property type="term" value="P:fibroblast apoptotic process"/>
    <property type="evidence" value="ECO:0007669"/>
    <property type="project" value="Ensembl"/>
</dbReference>
<dbReference type="GO" id="GO:0019064">
    <property type="term" value="P:fusion of virus membrane with host plasma membrane"/>
    <property type="evidence" value="ECO:0000314"/>
    <property type="project" value="UniProtKB"/>
</dbReference>
<dbReference type="GO" id="GO:0097241">
    <property type="term" value="P:hematopoietic stem cell migration to bone marrow"/>
    <property type="evidence" value="ECO:0000314"/>
    <property type="project" value="UniProtKB"/>
</dbReference>
<dbReference type="GO" id="GO:0033028">
    <property type="term" value="P:myeloid cell apoptotic process"/>
    <property type="evidence" value="ECO:0007669"/>
    <property type="project" value="Ensembl"/>
</dbReference>
<dbReference type="GO" id="GO:0043066">
    <property type="term" value="P:negative regulation of apoptotic process"/>
    <property type="evidence" value="ECO:0000314"/>
    <property type="project" value="UniProtKB"/>
</dbReference>
<dbReference type="GO" id="GO:0070168">
    <property type="term" value="P:negative regulation of biomineral tissue development"/>
    <property type="evidence" value="ECO:0000314"/>
    <property type="project" value="UniProtKB"/>
</dbReference>
<dbReference type="GO" id="GO:2000669">
    <property type="term" value="P:negative regulation of dendritic cell apoptotic process"/>
    <property type="evidence" value="ECO:0000314"/>
    <property type="project" value="UniProtKB"/>
</dbReference>
<dbReference type="GO" id="GO:0045892">
    <property type="term" value="P:negative regulation of DNA-templated transcription"/>
    <property type="evidence" value="ECO:0000314"/>
    <property type="project" value="UniProtKB"/>
</dbReference>
<dbReference type="GO" id="GO:2000352">
    <property type="term" value="P:negative regulation of endothelial cell apoptotic process"/>
    <property type="evidence" value="ECO:0000314"/>
    <property type="project" value="UniProtKB"/>
</dbReference>
<dbReference type="GO" id="GO:2000270">
    <property type="term" value="P:negative regulation of fibroblast apoptotic process"/>
    <property type="evidence" value="ECO:0000314"/>
    <property type="project" value="UniProtKB"/>
</dbReference>
<dbReference type="GO" id="GO:0032692">
    <property type="term" value="P:negative regulation of interleukin-1 production"/>
    <property type="evidence" value="ECO:0000314"/>
    <property type="project" value="UniProtKB"/>
</dbReference>
<dbReference type="GO" id="GO:0032715">
    <property type="term" value="P:negative regulation of interleukin-6 production"/>
    <property type="evidence" value="ECO:0000314"/>
    <property type="project" value="UniProtKB"/>
</dbReference>
<dbReference type="GO" id="GO:0033033">
    <property type="term" value="P:negative regulation of myeloid cell apoptotic process"/>
    <property type="evidence" value="ECO:0007669"/>
    <property type="project" value="Ensembl"/>
</dbReference>
<dbReference type="GO" id="GO:1900142">
    <property type="term" value="P:negative regulation of oligodendrocyte apoptotic process"/>
    <property type="evidence" value="ECO:0000314"/>
    <property type="project" value="UniProtKB"/>
</dbReference>
<dbReference type="GO" id="GO:2000533">
    <property type="term" value="P:negative regulation of renal albumin absorption"/>
    <property type="evidence" value="ECO:0000250"/>
    <property type="project" value="UniProtKB"/>
</dbReference>
<dbReference type="GO" id="GO:0032720">
    <property type="term" value="P:negative regulation of tumor necrosis factor production"/>
    <property type="evidence" value="ECO:0000314"/>
    <property type="project" value="UniProtKB"/>
</dbReference>
<dbReference type="GO" id="GO:0010804">
    <property type="term" value="P:negative regulation of tumor necrosis factor-mediated signaling pathway"/>
    <property type="evidence" value="ECO:0000314"/>
    <property type="project" value="UniProtKB"/>
</dbReference>
<dbReference type="GO" id="GO:0032689">
    <property type="term" value="P:negative regulation of type II interferon production"/>
    <property type="evidence" value="ECO:0000314"/>
    <property type="project" value="UniProtKB"/>
</dbReference>
<dbReference type="GO" id="GO:0001764">
    <property type="term" value="P:neuron migration"/>
    <property type="evidence" value="ECO:0007669"/>
    <property type="project" value="Ensembl"/>
</dbReference>
<dbReference type="GO" id="GO:0006909">
    <property type="term" value="P:phagocytosis"/>
    <property type="evidence" value="ECO:0000314"/>
    <property type="project" value="UniProtKB"/>
</dbReference>
<dbReference type="GO" id="GO:0001961">
    <property type="term" value="P:positive regulation of cytokine-mediated signaling pathway"/>
    <property type="evidence" value="ECO:0000315"/>
    <property type="project" value="UniProtKB"/>
</dbReference>
<dbReference type="GO" id="GO:2000510">
    <property type="term" value="P:positive regulation of dendritic cell chemotaxis"/>
    <property type="evidence" value="ECO:0000314"/>
    <property type="project" value="UniProtKB"/>
</dbReference>
<dbReference type="GO" id="GO:0070374">
    <property type="term" value="P:positive regulation of ERK1 and ERK2 cascade"/>
    <property type="evidence" value="ECO:0000314"/>
    <property type="project" value="MGI"/>
</dbReference>
<dbReference type="GO" id="GO:0048146">
    <property type="term" value="P:positive regulation of fibroblast proliferation"/>
    <property type="evidence" value="ECO:0000314"/>
    <property type="project" value="UniProtKB"/>
</dbReference>
<dbReference type="GO" id="GO:0010628">
    <property type="term" value="P:positive regulation of gene expression"/>
    <property type="evidence" value="ECO:0000314"/>
    <property type="project" value="UniProtKB"/>
</dbReference>
<dbReference type="GO" id="GO:0003104">
    <property type="term" value="P:positive regulation of glomerular filtration"/>
    <property type="evidence" value="ECO:0000250"/>
    <property type="project" value="UniProtKB"/>
</dbReference>
<dbReference type="GO" id="GO:0032825">
    <property type="term" value="P:positive regulation of natural killer cell differentiation"/>
    <property type="evidence" value="ECO:0000314"/>
    <property type="project" value="UniProtKB"/>
</dbReference>
<dbReference type="GO" id="GO:0050766">
    <property type="term" value="P:positive regulation of phagocytosis"/>
    <property type="evidence" value="ECO:0000314"/>
    <property type="project" value="UniProtKB"/>
</dbReference>
<dbReference type="GO" id="GO:0051897">
    <property type="term" value="P:positive regulation of phosphatidylinositol 3-kinase/protein kinase B signal transduction"/>
    <property type="evidence" value="ECO:0000314"/>
    <property type="project" value="UniProtKB"/>
</dbReference>
<dbReference type="GO" id="GO:0046827">
    <property type="term" value="P:positive regulation of protein export from nucleus"/>
    <property type="evidence" value="ECO:0000314"/>
    <property type="project" value="UniProtKB"/>
</dbReference>
<dbReference type="GO" id="GO:0045860">
    <property type="term" value="P:positive regulation of protein kinase activity"/>
    <property type="evidence" value="ECO:0000314"/>
    <property type="project" value="UniProtKB"/>
</dbReference>
<dbReference type="GO" id="GO:0001934">
    <property type="term" value="P:positive regulation of protein phosphorylation"/>
    <property type="evidence" value="ECO:0000314"/>
    <property type="project" value="UniProtKB"/>
</dbReference>
<dbReference type="GO" id="GO:0032008">
    <property type="term" value="P:positive regulation of TOR signaling"/>
    <property type="evidence" value="ECO:0000250"/>
    <property type="project" value="UniProtKB"/>
</dbReference>
<dbReference type="GO" id="GO:0072659">
    <property type="term" value="P:protein localization to plasma membrane"/>
    <property type="evidence" value="ECO:0000314"/>
    <property type="project" value="UniProtKB"/>
</dbReference>
<dbReference type="GO" id="GO:0006468">
    <property type="term" value="P:protein phosphorylation"/>
    <property type="evidence" value="ECO:0000314"/>
    <property type="project" value="UniProtKB"/>
</dbReference>
<dbReference type="GO" id="GO:0046813">
    <property type="term" value="P:receptor-mediated virion attachment to host cell"/>
    <property type="evidence" value="ECO:0000314"/>
    <property type="project" value="UniProtKB"/>
</dbReference>
<dbReference type="GO" id="GO:0007165">
    <property type="term" value="P:signal transduction"/>
    <property type="evidence" value="ECO:0000314"/>
    <property type="project" value="UniProtKB"/>
</dbReference>
<dbReference type="GO" id="GO:0046718">
    <property type="term" value="P:symbiont entry into host cell"/>
    <property type="evidence" value="ECO:0000314"/>
    <property type="project" value="UniProtKB"/>
</dbReference>
<dbReference type="GO" id="GO:0019079">
    <property type="term" value="P:viral genome replication"/>
    <property type="evidence" value="ECO:0000314"/>
    <property type="project" value="UniProtKB"/>
</dbReference>
<dbReference type="CDD" id="cd00054">
    <property type="entry name" value="EGF_CA"/>
    <property type="match status" value="2"/>
</dbReference>
<dbReference type="CDD" id="cd00110">
    <property type="entry name" value="LamG"/>
    <property type="match status" value="2"/>
</dbReference>
<dbReference type="FunFam" id="2.60.120.200:FF:000118">
    <property type="entry name" value="Growth arrest specific 6"/>
    <property type="match status" value="1"/>
</dbReference>
<dbReference type="FunFam" id="2.10.25.10:FF:000528">
    <property type="entry name" value="Growth arrest-specific protein 6"/>
    <property type="match status" value="1"/>
</dbReference>
<dbReference type="FunFam" id="2.10.25.10:FF:000550">
    <property type="entry name" value="Growth arrest-specific protein 6"/>
    <property type="match status" value="1"/>
</dbReference>
<dbReference type="FunFam" id="2.60.120.200:FF:000089">
    <property type="entry name" value="growth arrest-specific protein 6"/>
    <property type="match status" value="1"/>
</dbReference>
<dbReference type="FunFam" id="2.10.25.10:FF:000119">
    <property type="entry name" value="vitamin K-dependent protein S"/>
    <property type="match status" value="1"/>
</dbReference>
<dbReference type="FunFam" id="4.10.740.10:FF:000001">
    <property type="entry name" value="vitamin K-dependent protein S"/>
    <property type="match status" value="1"/>
</dbReference>
<dbReference type="Gene3D" id="2.60.120.200">
    <property type="match status" value="2"/>
</dbReference>
<dbReference type="Gene3D" id="4.10.740.10">
    <property type="entry name" value="Coagulation Factor IX"/>
    <property type="match status" value="1"/>
</dbReference>
<dbReference type="Gene3D" id="2.10.25.10">
    <property type="entry name" value="Laminin"/>
    <property type="match status" value="4"/>
</dbReference>
<dbReference type="InterPro" id="IPR026823">
    <property type="entry name" value="cEGF"/>
</dbReference>
<dbReference type="InterPro" id="IPR017857">
    <property type="entry name" value="Coagulation_fac-like_Gla_dom"/>
</dbReference>
<dbReference type="InterPro" id="IPR013320">
    <property type="entry name" value="ConA-like_dom_sf"/>
</dbReference>
<dbReference type="InterPro" id="IPR001881">
    <property type="entry name" value="EGF-like_Ca-bd_dom"/>
</dbReference>
<dbReference type="InterPro" id="IPR013032">
    <property type="entry name" value="EGF-like_CS"/>
</dbReference>
<dbReference type="InterPro" id="IPR000742">
    <property type="entry name" value="EGF-like_dom"/>
</dbReference>
<dbReference type="InterPro" id="IPR000152">
    <property type="entry name" value="EGF-type_Asp/Asn_hydroxyl_site"/>
</dbReference>
<dbReference type="InterPro" id="IPR018097">
    <property type="entry name" value="EGF_Ca-bd_CS"/>
</dbReference>
<dbReference type="InterPro" id="IPR051145">
    <property type="entry name" value="GAS-SHBG-PROS"/>
</dbReference>
<dbReference type="InterPro" id="IPR035972">
    <property type="entry name" value="GLA-like_dom_SF"/>
</dbReference>
<dbReference type="InterPro" id="IPR000294">
    <property type="entry name" value="GLA_domain"/>
</dbReference>
<dbReference type="InterPro" id="IPR009030">
    <property type="entry name" value="Growth_fac_rcpt_cys_sf"/>
</dbReference>
<dbReference type="InterPro" id="IPR001791">
    <property type="entry name" value="Laminin_G"/>
</dbReference>
<dbReference type="InterPro" id="IPR049883">
    <property type="entry name" value="NOTCH1_EGF-like"/>
</dbReference>
<dbReference type="PANTHER" id="PTHR24040:SF14">
    <property type="entry name" value="GROWTH ARREST-SPECIFIC PROTEIN 6"/>
    <property type="match status" value="1"/>
</dbReference>
<dbReference type="PANTHER" id="PTHR24040">
    <property type="entry name" value="LAMININ G-LIKE DOMAIN-CONTAINING PROTEIN"/>
    <property type="match status" value="1"/>
</dbReference>
<dbReference type="Pfam" id="PF12662">
    <property type="entry name" value="cEGF"/>
    <property type="match status" value="1"/>
</dbReference>
<dbReference type="Pfam" id="PF07645">
    <property type="entry name" value="EGF_CA"/>
    <property type="match status" value="1"/>
</dbReference>
<dbReference type="Pfam" id="PF00594">
    <property type="entry name" value="Gla"/>
    <property type="match status" value="1"/>
</dbReference>
<dbReference type="Pfam" id="PF12661">
    <property type="entry name" value="hEGF"/>
    <property type="match status" value="1"/>
</dbReference>
<dbReference type="Pfam" id="PF00054">
    <property type="entry name" value="Laminin_G_1"/>
    <property type="match status" value="1"/>
</dbReference>
<dbReference type="Pfam" id="PF02210">
    <property type="entry name" value="Laminin_G_2"/>
    <property type="match status" value="1"/>
</dbReference>
<dbReference type="PRINTS" id="PR00001">
    <property type="entry name" value="GLABLOOD"/>
</dbReference>
<dbReference type="SMART" id="SM00181">
    <property type="entry name" value="EGF"/>
    <property type="match status" value="4"/>
</dbReference>
<dbReference type="SMART" id="SM00179">
    <property type="entry name" value="EGF_CA"/>
    <property type="match status" value="4"/>
</dbReference>
<dbReference type="SMART" id="SM00069">
    <property type="entry name" value="GLA"/>
    <property type="match status" value="1"/>
</dbReference>
<dbReference type="SMART" id="SM00282">
    <property type="entry name" value="LamG"/>
    <property type="match status" value="2"/>
</dbReference>
<dbReference type="SUPFAM" id="SSF49899">
    <property type="entry name" value="Concanavalin A-like lectins/glucanases"/>
    <property type="match status" value="2"/>
</dbReference>
<dbReference type="SUPFAM" id="SSF57196">
    <property type="entry name" value="EGF/Laminin"/>
    <property type="match status" value="1"/>
</dbReference>
<dbReference type="SUPFAM" id="SSF57630">
    <property type="entry name" value="GLA-domain"/>
    <property type="match status" value="1"/>
</dbReference>
<dbReference type="SUPFAM" id="SSF57184">
    <property type="entry name" value="Growth factor receptor domain"/>
    <property type="match status" value="1"/>
</dbReference>
<dbReference type="PROSITE" id="PS00010">
    <property type="entry name" value="ASX_HYDROXYL"/>
    <property type="match status" value="4"/>
</dbReference>
<dbReference type="PROSITE" id="PS00022">
    <property type="entry name" value="EGF_1"/>
    <property type="match status" value="1"/>
</dbReference>
<dbReference type="PROSITE" id="PS01186">
    <property type="entry name" value="EGF_2"/>
    <property type="match status" value="3"/>
</dbReference>
<dbReference type="PROSITE" id="PS50026">
    <property type="entry name" value="EGF_3"/>
    <property type="match status" value="4"/>
</dbReference>
<dbReference type="PROSITE" id="PS01187">
    <property type="entry name" value="EGF_CA"/>
    <property type="match status" value="3"/>
</dbReference>
<dbReference type="PROSITE" id="PS00011">
    <property type="entry name" value="GLA_1"/>
    <property type="match status" value="1"/>
</dbReference>
<dbReference type="PROSITE" id="PS50998">
    <property type="entry name" value="GLA_2"/>
    <property type="match status" value="1"/>
</dbReference>
<dbReference type="PROSITE" id="PS50025">
    <property type="entry name" value="LAM_G_DOMAIN"/>
    <property type="match status" value="2"/>
</dbReference>
<organism>
    <name type="scientific">Homo sapiens</name>
    <name type="common">Human</name>
    <dbReference type="NCBI Taxonomy" id="9606"/>
    <lineage>
        <taxon>Eukaryota</taxon>
        <taxon>Metazoa</taxon>
        <taxon>Chordata</taxon>
        <taxon>Craniata</taxon>
        <taxon>Vertebrata</taxon>
        <taxon>Euteleostomi</taxon>
        <taxon>Mammalia</taxon>
        <taxon>Eutheria</taxon>
        <taxon>Euarchontoglires</taxon>
        <taxon>Primates</taxon>
        <taxon>Haplorrhini</taxon>
        <taxon>Catarrhini</taxon>
        <taxon>Hominidae</taxon>
        <taxon>Homo</taxon>
    </lineage>
</organism>
<keyword id="KW-0002">3D-structure</keyword>
<keyword id="KW-0025">Alternative splicing</keyword>
<keyword id="KW-0106">Calcium</keyword>
<keyword id="KW-1015">Disulfide bond</keyword>
<keyword id="KW-0245">EGF-like domain</keyword>
<keyword id="KW-0301">Gamma-carboxyglutamic acid</keyword>
<keyword id="KW-0325">Glycoprotein</keyword>
<keyword id="KW-0341">Growth regulation</keyword>
<keyword id="KW-0945">Host-virus interaction</keyword>
<keyword id="KW-0479">Metal-binding</keyword>
<keyword id="KW-0597">Phosphoprotein</keyword>
<keyword id="KW-1267">Proteomics identification</keyword>
<keyword id="KW-1185">Reference proteome</keyword>
<keyword id="KW-0677">Repeat</keyword>
<keyword id="KW-0964">Secreted</keyword>
<keyword id="KW-0732">Signal</keyword>
<reference key="1">
    <citation type="journal article" date="1993" name="Mol. Cell. Biol.">
        <title>The protein encoded by a growth arrest-specific gene (gas6) is a new member of the vitamin K-dependent proteins related to protein S, a negative coregulator in the blood coagulation cascade.</title>
        <authorList>
            <person name="Manfioletti G."/>
            <person name="Brancolini C."/>
            <person name="Avanzi G."/>
            <person name="Schneider C."/>
        </authorList>
    </citation>
    <scope>NUCLEOTIDE SEQUENCE [MRNA] (ISOFORM 2)</scope>
    <scope>TISSUE SPECIFICITY</scope>
    <source>
        <tissue>Cervix carcinoma</tissue>
    </source>
</reference>
<reference key="2">
    <citation type="journal article" date="2004" name="Hum. Mutat.">
        <title>Human vitamin K-dependent GAS6: gene structure, allelic variation, and association with stroke.</title>
        <authorList>
            <person name="Munoz X."/>
            <person name="Sumoy L."/>
            <person name="Ramirez-Lorca R."/>
            <person name="Villar J."/>
            <person name="de Frutos P.G."/>
            <person name="Sala N."/>
        </authorList>
    </citation>
    <scope>NUCLEOTIDE SEQUENCE [GENOMIC DNA]</scope>
</reference>
<reference key="3">
    <citation type="journal article" date="2004" name="Nat. Genet.">
        <title>Complete sequencing and characterization of 21,243 full-length human cDNAs.</title>
        <authorList>
            <person name="Ota T."/>
            <person name="Suzuki Y."/>
            <person name="Nishikawa T."/>
            <person name="Otsuki T."/>
            <person name="Sugiyama T."/>
            <person name="Irie R."/>
            <person name="Wakamatsu A."/>
            <person name="Hayashi K."/>
            <person name="Sato H."/>
            <person name="Nagai K."/>
            <person name="Kimura K."/>
            <person name="Makita H."/>
            <person name="Sekine M."/>
            <person name="Obayashi M."/>
            <person name="Nishi T."/>
            <person name="Shibahara T."/>
            <person name="Tanaka T."/>
            <person name="Ishii S."/>
            <person name="Yamamoto J."/>
            <person name="Saito K."/>
            <person name="Kawai Y."/>
            <person name="Isono Y."/>
            <person name="Nakamura Y."/>
            <person name="Nagahari K."/>
            <person name="Murakami K."/>
            <person name="Yasuda T."/>
            <person name="Iwayanagi T."/>
            <person name="Wagatsuma M."/>
            <person name="Shiratori A."/>
            <person name="Sudo H."/>
            <person name="Hosoiri T."/>
            <person name="Kaku Y."/>
            <person name="Kodaira H."/>
            <person name="Kondo H."/>
            <person name="Sugawara M."/>
            <person name="Takahashi M."/>
            <person name="Kanda K."/>
            <person name="Yokoi T."/>
            <person name="Furuya T."/>
            <person name="Kikkawa E."/>
            <person name="Omura Y."/>
            <person name="Abe K."/>
            <person name="Kamihara K."/>
            <person name="Katsuta N."/>
            <person name="Sato K."/>
            <person name="Tanikawa M."/>
            <person name="Yamazaki M."/>
            <person name="Ninomiya K."/>
            <person name="Ishibashi T."/>
            <person name="Yamashita H."/>
            <person name="Murakawa K."/>
            <person name="Fujimori K."/>
            <person name="Tanai H."/>
            <person name="Kimata M."/>
            <person name="Watanabe M."/>
            <person name="Hiraoka S."/>
            <person name="Chiba Y."/>
            <person name="Ishida S."/>
            <person name="Ono Y."/>
            <person name="Takiguchi S."/>
            <person name="Watanabe S."/>
            <person name="Yosida M."/>
            <person name="Hotuta T."/>
            <person name="Kusano J."/>
            <person name="Kanehori K."/>
            <person name="Takahashi-Fujii A."/>
            <person name="Hara H."/>
            <person name="Tanase T.-O."/>
            <person name="Nomura Y."/>
            <person name="Togiya S."/>
            <person name="Komai F."/>
            <person name="Hara R."/>
            <person name="Takeuchi K."/>
            <person name="Arita M."/>
            <person name="Imose N."/>
            <person name="Musashino K."/>
            <person name="Yuuki H."/>
            <person name="Oshima A."/>
            <person name="Sasaki N."/>
            <person name="Aotsuka S."/>
            <person name="Yoshikawa Y."/>
            <person name="Matsunawa H."/>
            <person name="Ichihara T."/>
            <person name="Shiohata N."/>
            <person name="Sano S."/>
            <person name="Moriya S."/>
            <person name="Momiyama H."/>
            <person name="Satoh N."/>
            <person name="Takami S."/>
            <person name="Terashima Y."/>
            <person name="Suzuki O."/>
            <person name="Nakagawa S."/>
            <person name="Senoh A."/>
            <person name="Mizoguchi H."/>
            <person name="Goto Y."/>
            <person name="Shimizu F."/>
            <person name="Wakebe H."/>
            <person name="Hishigaki H."/>
            <person name="Watanabe T."/>
            <person name="Sugiyama A."/>
            <person name="Takemoto M."/>
            <person name="Kawakami B."/>
            <person name="Yamazaki M."/>
            <person name="Watanabe K."/>
            <person name="Kumagai A."/>
            <person name="Itakura S."/>
            <person name="Fukuzumi Y."/>
            <person name="Fujimori Y."/>
            <person name="Komiyama M."/>
            <person name="Tashiro H."/>
            <person name="Tanigami A."/>
            <person name="Fujiwara T."/>
            <person name="Ono T."/>
            <person name="Yamada K."/>
            <person name="Fujii Y."/>
            <person name="Ozaki K."/>
            <person name="Hirao M."/>
            <person name="Ohmori Y."/>
            <person name="Kawabata A."/>
            <person name="Hikiji T."/>
            <person name="Kobatake N."/>
            <person name="Inagaki H."/>
            <person name="Ikema Y."/>
            <person name="Okamoto S."/>
            <person name="Okitani R."/>
            <person name="Kawakami T."/>
            <person name="Noguchi S."/>
            <person name="Itoh T."/>
            <person name="Shigeta K."/>
            <person name="Senba T."/>
            <person name="Matsumura K."/>
            <person name="Nakajima Y."/>
            <person name="Mizuno T."/>
            <person name="Morinaga M."/>
            <person name="Sasaki M."/>
            <person name="Togashi T."/>
            <person name="Oyama M."/>
            <person name="Hata H."/>
            <person name="Watanabe M."/>
            <person name="Komatsu T."/>
            <person name="Mizushima-Sugano J."/>
            <person name="Satoh T."/>
            <person name="Shirai Y."/>
            <person name="Takahashi Y."/>
            <person name="Nakagawa K."/>
            <person name="Okumura K."/>
            <person name="Nagase T."/>
            <person name="Nomura N."/>
            <person name="Kikuchi H."/>
            <person name="Masuho Y."/>
            <person name="Yamashita R."/>
            <person name="Nakai K."/>
            <person name="Yada T."/>
            <person name="Nakamura Y."/>
            <person name="Ohara O."/>
            <person name="Isogai T."/>
            <person name="Sugano S."/>
        </authorList>
    </citation>
    <scope>NUCLEOTIDE SEQUENCE [LARGE SCALE MRNA] (ISOFORMS 2; 3; 4 AND 5)</scope>
    <source>
        <tissue>Kidney</tissue>
        <tissue>Uterus</tissue>
    </source>
</reference>
<reference key="4">
    <citation type="submission" date="2007-05" db="EMBL/GenBank/DDBJ databases">
        <authorList>
            <consortium name="SeattleSNPs variation discovery resource"/>
        </authorList>
    </citation>
    <scope>NUCLEOTIDE SEQUENCE [GENOMIC DNA]</scope>
    <scope>VARIANTS LEU-41; TYR-231; MET-347; ARG-500; LEU-580; LYS-612 AND GLN-616</scope>
</reference>
<reference key="5">
    <citation type="journal article" date="2004" name="Nature">
        <title>The DNA sequence and analysis of human chromosome 13.</title>
        <authorList>
            <person name="Dunham A."/>
            <person name="Matthews L.H."/>
            <person name="Burton J."/>
            <person name="Ashurst J.L."/>
            <person name="Howe K.L."/>
            <person name="Ashcroft K.J."/>
            <person name="Beare D.M."/>
            <person name="Burford D.C."/>
            <person name="Hunt S.E."/>
            <person name="Griffiths-Jones S."/>
            <person name="Jones M.C."/>
            <person name="Keenan S.J."/>
            <person name="Oliver K."/>
            <person name="Scott C.E."/>
            <person name="Ainscough R."/>
            <person name="Almeida J.P."/>
            <person name="Ambrose K.D."/>
            <person name="Andrews D.T."/>
            <person name="Ashwell R.I.S."/>
            <person name="Babbage A.K."/>
            <person name="Bagguley C.L."/>
            <person name="Bailey J."/>
            <person name="Bannerjee R."/>
            <person name="Barlow K.F."/>
            <person name="Bates K."/>
            <person name="Beasley H."/>
            <person name="Bird C.P."/>
            <person name="Bray-Allen S."/>
            <person name="Brown A.J."/>
            <person name="Brown J.Y."/>
            <person name="Burrill W."/>
            <person name="Carder C."/>
            <person name="Carter N.P."/>
            <person name="Chapman J.C."/>
            <person name="Clamp M.E."/>
            <person name="Clark S.Y."/>
            <person name="Clarke G."/>
            <person name="Clee C.M."/>
            <person name="Clegg S.C."/>
            <person name="Cobley V."/>
            <person name="Collins J.E."/>
            <person name="Corby N."/>
            <person name="Coville G.J."/>
            <person name="Deloukas P."/>
            <person name="Dhami P."/>
            <person name="Dunham I."/>
            <person name="Dunn M."/>
            <person name="Earthrowl M.E."/>
            <person name="Ellington A.G."/>
            <person name="Faulkner L."/>
            <person name="Frankish A.G."/>
            <person name="Frankland J."/>
            <person name="French L."/>
            <person name="Garner P."/>
            <person name="Garnett J."/>
            <person name="Gilbert J.G.R."/>
            <person name="Gilson C.J."/>
            <person name="Ghori J."/>
            <person name="Grafham D.V."/>
            <person name="Gribble S.M."/>
            <person name="Griffiths C."/>
            <person name="Hall R.E."/>
            <person name="Hammond S."/>
            <person name="Harley J.L."/>
            <person name="Hart E.A."/>
            <person name="Heath P.D."/>
            <person name="Howden P.J."/>
            <person name="Huckle E.J."/>
            <person name="Hunt P.J."/>
            <person name="Hunt A.R."/>
            <person name="Johnson C."/>
            <person name="Johnson D."/>
            <person name="Kay M."/>
            <person name="Kimberley A.M."/>
            <person name="King A."/>
            <person name="Laird G.K."/>
            <person name="Langford C.J."/>
            <person name="Lawlor S."/>
            <person name="Leongamornlert D.A."/>
            <person name="Lloyd D.M."/>
            <person name="Lloyd C."/>
            <person name="Loveland J.E."/>
            <person name="Lovell J."/>
            <person name="Martin S."/>
            <person name="Mashreghi-Mohammadi M."/>
            <person name="McLaren S.J."/>
            <person name="McMurray A."/>
            <person name="Milne S."/>
            <person name="Moore M.J.F."/>
            <person name="Nickerson T."/>
            <person name="Palmer S.A."/>
            <person name="Pearce A.V."/>
            <person name="Peck A.I."/>
            <person name="Pelan S."/>
            <person name="Phillimore B."/>
            <person name="Porter K.M."/>
            <person name="Rice C.M."/>
            <person name="Searle S."/>
            <person name="Sehra H.K."/>
            <person name="Shownkeen R."/>
            <person name="Skuce C.D."/>
            <person name="Smith M."/>
            <person name="Steward C.A."/>
            <person name="Sycamore N."/>
            <person name="Tester J."/>
            <person name="Thomas D.W."/>
            <person name="Tracey A."/>
            <person name="Tromans A."/>
            <person name="Tubby B."/>
            <person name="Wall M."/>
            <person name="Wallis J.M."/>
            <person name="West A.P."/>
            <person name="Whitehead S.L."/>
            <person name="Willey D.L."/>
            <person name="Wilming L."/>
            <person name="Wray P.W."/>
            <person name="Wright M.W."/>
            <person name="Young L."/>
            <person name="Coulson A."/>
            <person name="Durbin R.M."/>
            <person name="Hubbard T."/>
            <person name="Sulston J.E."/>
            <person name="Beck S."/>
            <person name="Bentley D.R."/>
            <person name="Rogers J."/>
            <person name="Ross M.T."/>
        </authorList>
    </citation>
    <scope>NUCLEOTIDE SEQUENCE [LARGE SCALE GENOMIC DNA]</scope>
</reference>
<reference key="6">
    <citation type="journal article" date="2004" name="Genome Res.">
        <title>The status, quality, and expansion of the NIH full-length cDNA project: the Mammalian Gene Collection (MGC).</title>
        <authorList>
            <consortium name="The MGC Project Team"/>
        </authorList>
    </citation>
    <scope>NUCLEOTIDE SEQUENCE [LARGE SCALE MRNA] (ISOFORM 1)</scope>
    <source>
        <tissue>Fetal lung</tissue>
        <tissue>Fetal spleen</tissue>
    </source>
</reference>
<reference key="7">
    <citation type="submission" date="2002-10" db="EMBL/GenBank/DDBJ databases">
        <authorList>
            <person name="Maree A.O."/>
            <person name="Hillmann A."/>
            <person name="McRedmond J.P."/>
            <person name="Fitzgerald D.J."/>
        </authorList>
    </citation>
    <scope>NUCLEOTIDE SEQUENCE [GENOMIC DNA] OF 1-85</scope>
</reference>
<reference key="8">
    <citation type="journal article" date="1995" name="Nature">
        <title>Axl receptor tyrosine kinase stimulated by the vitamin K-dependent protein encoded by growth-arrest-specific gene 6.</title>
        <authorList>
            <person name="Varnum B.C."/>
            <person name="Young C."/>
            <person name="Elliott G."/>
            <person name="Garcia A."/>
            <person name="Bartley T.D."/>
            <person name="Fridell Y.W."/>
            <person name="Hunt R.W."/>
            <person name="Trail G."/>
            <person name="Clogston C."/>
            <person name="Toso R.J."/>
            <person name="Yanagihara D."/>
            <person name="Bennett L."/>
            <person name="Silber M."/>
            <person name="Merewether L.A."/>
            <person name="Tseng A."/>
            <person name="Escobar E."/>
            <person name="Liu E.T."/>
            <person name="Yamane H.K."/>
        </authorList>
    </citation>
    <scope>RECEPTOR INTERACTION</scope>
</reference>
<reference key="9">
    <citation type="journal article" date="1995" name="Cell">
        <title>The anticoagulation factor protein S and its relative, Gas6, are ligands for the Tyro 3/Axl family of receptor tyrosine kinases.</title>
        <authorList>
            <person name="Stitt T.N."/>
            <person name="Conn G."/>
            <person name="Gore M."/>
            <person name="Lai C."/>
            <person name="Bruno J."/>
            <person name="Radziejewski C."/>
            <person name="Mattsson K."/>
            <person name="Fisher J."/>
            <person name="Gies D.R."/>
            <person name="Jones P.F."/>
            <person name="Masiakowski P."/>
            <person name="Ryan T.E."/>
            <person name="Tobkes N.J."/>
            <person name="Chen D.H."/>
            <person name="DiStefano P.S."/>
            <person name="Long G.L."/>
            <person name="Basilico C."/>
            <person name="Goldfarb M.P."/>
            <person name="Lemke G."/>
            <person name="Glass D.J."/>
            <person name="Yancopoulos G.D."/>
        </authorList>
    </citation>
    <scope>RECEPTOR INTERACTION</scope>
</reference>
<reference key="10">
    <citation type="journal article" date="1997" name="FEBS Lett.">
        <title>Identification and tissue expression of a splice variant for the growth arrest-specific gene gas6.</title>
        <authorList>
            <person name="Marcandalli P."/>
            <person name="Gostissa M."/>
            <person name="Varnum B."/>
            <person name="Goruppi S."/>
            <person name="Schneider C."/>
        </authorList>
    </citation>
    <scope>ALTERNATIVE SPLICING (ISOFORM 2)</scope>
    <scope>TISSUE SPECIFICITY</scope>
</reference>
<reference key="11">
    <citation type="journal article" date="1996" name="J. Biol. Chem.">
        <title>Identification of the product of growth arrest-specific gene 6 as a common ligand for Axl, Sky, and Mer receptor tyrosine kinases.</title>
        <authorList>
            <person name="Nagata K."/>
            <person name="Ohashi K."/>
            <person name="Nakano T."/>
            <person name="Arita H."/>
            <person name="Zong C."/>
            <person name="Hanafusa H."/>
            <person name="Mizuno K."/>
        </authorList>
    </citation>
    <scope>RECEPTOR INTERACTION</scope>
</reference>
<reference key="12">
    <citation type="journal article" date="1997" name="FEBS Lett.">
        <title>The product of a gas6 splice variant allows the release of the domain responsible for Axl tyrosine kinase receptor activation.</title>
        <authorList>
            <person name="Goruppi S."/>
            <person name="Yamane H."/>
            <person name="Marcandalli P."/>
            <person name="Garcia A."/>
            <person name="Clogston C."/>
            <person name="Gostissa M."/>
            <person name="Varnum B."/>
            <person name="Schneider C."/>
        </authorList>
    </citation>
    <scope>RECEPTOR INTERACTION</scope>
    <scope>SUBCELLULAR LOCATION</scope>
    <scope>PROTEOLYTIC PROCESSING</scope>
</reference>
<reference key="13">
    <citation type="journal article" date="2002" name="Circ. Res.">
        <title>Acidification prevents endothelial cell apoptosis by Axl activation.</title>
        <authorList>
            <person name="D'Arcangelo D."/>
            <person name="Gaetano C."/>
            <person name="Capogrossi M.C."/>
        </authorList>
    </citation>
    <scope>FUNCTION OF THE GAS6/AXL SIGNALING PATHWAY</scope>
</reference>
<reference key="14">
    <citation type="journal article" date="2009" name="Blood">
        <title>The Axl/Gas6 pathway is required for optimal cytokine signaling during human natural killer cell development.</title>
        <authorList>
            <person name="Park I.K."/>
            <person name="Giovenzana C."/>
            <person name="Hughes T.L."/>
            <person name="Yu J."/>
            <person name="Trotta R."/>
            <person name="Caligiuri M.A."/>
        </authorList>
    </citation>
    <scope>FUNCTION OF THE GAS6/AXL SIGNALING PATHWAY</scope>
</reference>
<reference key="15">
    <citation type="journal article" date="2011" name="Cell Host Microbe">
        <title>The soluble serum protein Gas6 bridges virion envelope phosphatidylserine to the TAM receptor tyrosine kinase Axl to mediate viral entry.</title>
        <authorList>
            <person name="Morizono K."/>
            <person name="Xie Y."/>
            <person name="Olafsen T."/>
            <person name="Lee B."/>
            <person name="Dasgupta A."/>
            <person name="Wu A.M."/>
            <person name="Chen I.S."/>
        </authorList>
    </citation>
    <scope>FUNCTION (MICROBIAL INFECTION)</scope>
</reference>
<reference key="16">
    <citation type="journal article" date="2012" name="Cell Host Microbe">
        <title>The TIM and TAM families of phosphatidylserine receptors mediate dengue virus entry.</title>
        <authorList>
            <person name="Meertens L."/>
            <person name="Carnec X."/>
            <person name="Lecoin M.P."/>
            <person name="Ramdasi R."/>
            <person name="Guivel-Benhassine F."/>
            <person name="Lew E."/>
            <person name="Lemke G."/>
            <person name="Schwartz O."/>
            <person name="Amara A."/>
        </authorList>
    </citation>
    <scope>FUNCTION (MICROBIAL INFECTION)</scope>
</reference>
<reference key="17">
    <citation type="journal article" date="2006" name="J. Virol.">
        <title>Tyro3 family-mediated cell entry of Ebola and Marburg viruses.</title>
        <authorList>
            <person name="Shimojima M."/>
            <person name="Takada A."/>
            <person name="Ebihara H."/>
            <person name="Neumann G."/>
            <person name="Fujioka K."/>
            <person name="Irimura T."/>
            <person name="Jones S."/>
            <person name="Feldmann H."/>
            <person name="Kawaoka Y."/>
        </authorList>
    </citation>
    <scope>FUNCTION (MICROBIAL INFECTION)</scope>
</reference>
<reference key="18">
    <citation type="journal article" date="2015" name="Cell">
        <title>A single kinase generates the majority of the secreted phosphoproteome.</title>
        <authorList>
            <person name="Tagliabracci V.S."/>
            <person name="Wiley S.E."/>
            <person name="Guo X."/>
            <person name="Kinch L.N."/>
            <person name="Durrant E."/>
            <person name="Wen J."/>
            <person name="Xiao J."/>
            <person name="Cui J."/>
            <person name="Nguyen K.B."/>
            <person name="Engel J.L."/>
            <person name="Coon J.J."/>
            <person name="Grishin N."/>
            <person name="Pinna L.A."/>
            <person name="Pagliarini D.J."/>
            <person name="Dixon J.E."/>
        </authorList>
    </citation>
    <scope>PHOSPHORYLATION AT SER-71</scope>
</reference>
<reference key="19">
    <citation type="journal article" date="1996" name="J. Biol. Chem.">
        <title>Characterization of Gas6, a member of the superfamily of G domain-containing proteins, as a ligand for Rse and Axl.</title>
        <authorList>
            <person name="Mark M.R."/>
            <person name="Chen J."/>
            <person name="Hammonds R.G."/>
            <person name="Sadick M."/>
            <person name="Godowski P.J."/>
        </authorList>
    </citation>
    <scope>X-RAY CRYSTALLOGRAPHY (2.2 ANGSTROMS) OF 261-678</scope>
    <scope>MUTAGENESIS OF PHE-487; LEU-620 AND TYR-660</scope>
    <scope>INTERACTION WITH AXL</scope>
</reference>
<reference key="20">
    <citation type="journal article" date="2006" name="EMBO J.">
        <title>Structural basis for Gas6-Axl signalling.</title>
        <authorList>
            <person name="Sasaki T."/>
            <person name="Knyazev P.G."/>
            <person name="Clout N.J."/>
            <person name="Cheburkin Y."/>
            <person name="Goehring W."/>
            <person name="Ullrich A."/>
            <person name="Timpl R."/>
            <person name="Hohenester E."/>
        </authorList>
    </citation>
    <scope>X-RAY CRYSTALLOGRAPHY (3.3 ANGSTROMS) OF 261-678 IN COMPLEX WITH AXL</scope>
    <scope>SUBUNIT</scope>
    <scope>GLYCOSYLATION AT ASN-420</scope>
    <scope>MUTAGENESIS OF ARG-310 AND LYS-312</scope>
</reference>
<evidence type="ECO:0000250" key="1"/>
<evidence type="ECO:0000250" key="2">
    <source>
        <dbReference type="UniProtKB" id="Q63772"/>
    </source>
</evidence>
<evidence type="ECO:0000255" key="3"/>
<evidence type="ECO:0000255" key="4">
    <source>
        <dbReference type="PROSITE-ProRule" id="PRU00076"/>
    </source>
</evidence>
<evidence type="ECO:0000255" key="5">
    <source>
        <dbReference type="PROSITE-ProRule" id="PRU00122"/>
    </source>
</evidence>
<evidence type="ECO:0000255" key="6">
    <source>
        <dbReference type="PROSITE-ProRule" id="PRU00463"/>
    </source>
</evidence>
<evidence type="ECO:0000269" key="7">
    <source>
    </source>
</evidence>
<evidence type="ECO:0000269" key="8">
    <source>
    </source>
</evidence>
<evidence type="ECO:0000269" key="9">
    <source>
    </source>
</evidence>
<evidence type="ECO:0000269" key="10">
    <source>
    </source>
</evidence>
<evidence type="ECO:0000269" key="11">
    <source>
    </source>
</evidence>
<evidence type="ECO:0000269" key="12">
    <source>
    </source>
</evidence>
<evidence type="ECO:0000269" key="13">
    <source>
    </source>
</evidence>
<evidence type="ECO:0000269" key="14">
    <source>
    </source>
</evidence>
<evidence type="ECO:0000269" key="15">
    <source>
    </source>
</evidence>
<evidence type="ECO:0000269" key="16">
    <source>
    </source>
</evidence>
<evidence type="ECO:0000269" key="17">
    <source>
    </source>
</evidence>
<evidence type="ECO:0000269" key="18">
    <source ref="4"/>
</evidence>
<evidence type="ECO:0000303" key="19">
    <source>
    </source>
</evidence>
<evidence type="ECO:0000305" key="20"/>
<evidence type="ECO:0000312" key="21">
    <source>
        <dbReference type="HGNC" id="HGNC:4168"/>
    </source>
</evidence>
<evidence type="ECO:0007829" key="22">
    <source>
        <dbReference type="PDB" id="1H30"/>
    </source>
</evidence>
<evidence type="ECO:0007829" key="23">
    <source>
        <dbReference type="PDB" id="4RA0"/>
    </source>
</evidence>
<evidence type="ECO:0007829" key="24">
    <source>
        <dbReference type="PDB" id="5VXZ"/>
    </source>
</evidence>
<accession>Q14393</accession>
<accession>B3KRQ7</accession>
<accession>B3KVL4</accession>
<accession>E9PBL7</accession>
<accession>Q6IMN1</accession>
<accession>Q7Z7N3</accession>
<proteinExistence type="evidence at protein level"/>
<feature type="signal peptide" evidence="3">
    <location>
        <begin position="1"/>
        <end position="30"/>
    </location>
</feature>
<feature type="chain" id="PRO_0000007589" description="Growth arrest-specific protein 6">
    <location>
        <begin position="31"/>
        <end position="678"/>
    </location>
</feature>
<feature type="domain" description="Gla" evidence="6">
    <location>
        <begin position="53"/>
        <end position="94"/>
    </location>
</feature>
<feature type="domain" description="EGF-like 1; calcium-binding" evidence="4">
    <location>
        <begin position="116"/>
        <end position="154"/>
    </location>
</feature>
<feature type="domain" description="EGF-like 2; calcium-binding" evidence="4">
    <location>
        <begin position="156"/>
        <end position="196"/>
    </location>
</feature>
<feature type="domain" description="EGF-like 3; calcium-binding" evidence="4">
    <location>
        <begin position="197"/>
        <end position="237"/>
    </location>
</feature>
<feature type="domain" description="EGF-like 4; calcium-binding" evidence="4">
    <location>
        <begin position="238"/>
        <end position="278"/>
    </location>
</feature>
<feature type="domain" description="Laminin G-like 1" evidence="5">
    <location>
        <begin position="298"/>
        <end position="470"/>
    </location>
</feature>
<feature type="domain" description="Laminin G-like 2" evidence="5">
    <location>
        <begin position="477"/>
        <end position="670"/>
    </location>
</feature>
<feature type="binding site">
    <location>
        <position position="329"/>
    </location>
    <ligand>
        <name>Ca(2+)</name>
        <dbReference type="ChEBI" id="CHEBI:29108"/>
    </ligand>
</feature>
<feature type="binding site">
    <location>
        <position position="331"/>
    </location>
    <ligand>
        <name>Ca(2+)</name>
        <dbReference type="ChEBI" id="CHEBI:29108"/>
    </ligand>
</feature>
<feature type="binding site">
    <location>
        <position position="440"/>
    </location>
    <ligand>
        <name>Ca(2+)</name>
        <dbReference type="ChEBI" id="CHEBI:29108"/>
    </ligand>
</feature>
<feature type="binding site">
    <location>
        <position position="656"/>
    </location>
    <ligand>
        <name>Ca(2+)</name>
        <dbReference type="ChEBI" id="CHEBI:29108"/>
    </ligand>
</feature>
<feature type="modified residue" description="Phosphoserine; by FAM20C" evidence="13">
    <location>
        <position position="71"/>
    </location>
</feature>
<feature type="modified residue" description="Phosphothreonine" evidence="2">
    <location>
        <position position="621"/>
    </location>
</feature>
<feature type="modified residue" description="Phosphothreonine" evidence="2">
    <location>
        <position position="637"/>
    </location>
</feature>
<feature type="modified residue" description="Phosphotyrosine" evidence="2">
    <location>
        <position position="640"/>
    </location>
</feature>
<feature type="glycosylation site" description="N-linked (GlcNAc...) asparagine" evidence="8">
    <location>
        <position position="420"/>
    </location>
</feature>
<feature type="disulfide bond" evidence="1">
    <location>
        <begin position="65"/>
        <end position="70"/>
    </location>
</feature>
<feature type="disulfide bond" evidence="1">
    <location>
        <begin position="120"/>
        <end position="133"/>
    </location>
</feature>
<feature type="disulfide bond" evidence="1">
    <location>
        <begin position="125"/>
        <end position="142"/>
    </location>
</feature>
<feature type="disulfide bond" evidence="1">
    <location>
        <begin position="144"/>
        <end position="153"/>
    </location>
</feature>
<feature type="disulfide bond" evidence="1">
    <location>
        <begin position="160"/>
        <end position="171"/>
    </location>
</feature>
<feature type="disulfide bond" evidence="1">
    <location>
        <begin position="167"/>
        <end position="180"/>
    </location>
</feature>
<feature type="disulfide bond" evidence="1">
    <location>
        <begin position="182"/>
        <end position="195"/>
    </location>
</feature>
<feature type="disulfide bond" evidence="1">
    <location>
        <begin position="201"/>
        <end position="212"/>
    </location>
</feature>
<feature type="disulfide bond" evidence="1">
    <location>
        <begin position="207"/>
        <end position="221"/>
    </location>
</feature>
<feature type="disulfide bond" evidence="1">
    <location>
        <begin position="223"/>
        <end position="236"/>
    </location>
</feature>
<feature type="disulfide bond" evidence="1">
    <location>
        <begin position="242"/>
        <end position="251"/>
    </location>
</feature>
<feature type="disulfide bond" evidence="1">
    <location>
        <begin position="247"/>
        <end position="260"/>
    </location>
</feature>
<feature type="disulfide bond">
    <location>
        <begin position="262"/>
        <end position="277"/>
    </location>
</feature>
<feature type="disulfide bond">
    <location>
        <begin position="283"/>
        <end position="570"/>
    </location>
</feature>
<feature type="disulfide bond">
    <location>
        <begin position="444"/>
        <end position="470"/>
    </location>
</feature>
<feature type="disulfide bond">
    <location>
        <begin position="643"/>
        <end position="670"/>
    </location>
</feature>
<feature type="splice variant" id="VSP_059767" description="In isoform 5.">
    <location>
        <begin position="1"/>
        <end position="299"/>
    </location>
</feature>
<feature type="splice variant" id="VSP_059768" description="In isoform 4.">
    <location>
        <begin position="1"/>
        <end position="273"/>
    </location>
</feature>
<feature type="splice variant" id="VSP_059769" description="In isoform 3.">
    <original>MAPSLSPGPAALRRAPQLLLLLLAAECALAALLPAREATQFLRPRQRRAFQVFEEAKQGHLERECVEELCSREEAREVFENDPETDYFYPRYLD</original>
    <variation>MCMCQASPPPAALAGCLLSSCVQPAREHGGAFSKAEWLSN</variation>
    <location>
        <begin position="1"/>
        <end position="94"/>
    </location>
</feature>
<feature type="splice variant" id="VSP_059770" description="In isoform 2." evidence="19">
    <original>E</original>
    <variation>ELEAGWPCPRHRRDGSPAARPGRGAQGSRSEGHIPDRRGPRPWQ</variation>
    <location>
        <position position="278"/>
    </location>
</feature>
<feature type="sequence variant" id="VAR_038823" description="In dbSNP:rs201378406." evidence="18">
    <original>F</original>
    <variation>L</variation>
    <location>
        <position position="41"/>
    </location>
</feature>
<feature type="sequence variant" id="VAR_038824" description="In dbSNP:rs146159446." evidence="18">
    <original>S</original>
    <variation>Y</variation>
    <location>
        <position position="231"/>
    </location>
</feature>
<feature type="sequence variant" id="VAR_038825" description="In dbSNP:rs144457857." evidence="18">
    <original>V</original>
    <variation>M</variation>
    <location>
        <position position="347"/>
    </location>
</feature>
<feature type="sequence variant" id="VAR_038826" description="In dbSNP:rs7992146." evidence="18">
    <original>G</original>
    <variation>R</variation>
    <location>
        <position position="500"/>
    </location>
</feature>
<feature type="sequence variant" id="VAR_038827" description="In dbSNP:rs79807310." evidence="18">
    <original>S</original>
    <variation>L</variation>
    <location>
        <position position="580"/>
    </location>
</feature>
<feature type="sequence variant" id="VAR_038828" description="In dbSNP:rs73583241." evidence="18">
    <original>E</original>
    <variation>K</variation>
    <location>
        <position position="612"/>
    </location>
</feature>
<feature type="sequence variant" id="VAR_038829" description="In dbSNP:rs199700915." evidence="18">
    <original>R</original>
    <variation>Q</variation>
    <location>
        <position position="616"/>
    </location>
</feature>
<feature type="mutagenesis site" description="Strongly reduced affinity for AXL. Abolishes phosphorylation of AXL." evidence="8">
    <original>R</original>
    <variation>E</variation>
    <location>
        <position position="310"/>
    </location>
</feature>
<feature type="mutagenesis site" description="Strongly reduced affinity for AXL. Abolishes phosphorylation of AXL." evidence="8">
    <original>K</original>
    <variation>E</variation>
    <location>
        <position position="312"/>
    </location>
</feature>
<feature type="mutagenesis site" description="Decreases activation of AXL." evidence="15">
    <original>F</original>
    <variation>A</variation>
    <location>
        <position position="487"/>
    </location>
</feature>
<feature type="mutagenesis site" description="Reduces affinity for AXL 15-fold and decreases activation of AXL." evidence="15">
    <original>L</original>
    <variation>A</variation>
    <location>
        <position position="620"/>
    </location>
</feature>
<feature type="mutagenesis site" description="Reduces affinity for AXL 3-fold." evidence="15">
    <original>Y</original>
    <variation>A</variation>
    <location>
        <position position="660"/>
    </location>
</feature>
<feature type="sequence conflict" description="In Ref. 3; BAG52469." evidence="20" ref="3">
    <original>E</original>
    <variation>K</variation>
    <location>
        <position position="356"/>
    </location>
</feature>
<feature type="helix" evidence="22">
    <location>
        <begin position="264"/>
        <end position="266"/>
    </location>
</feature>
<feature type="strand" evidence="22">
    <location>
        <begin position="268"/>
        <end position="271"/>
    </location>
</feature>
<feature type="turn" evidence="22">
    <location>
        <begin position="272"/>
        <end position="275"/>
    </location>
</feature>
<feature type="strand" evidence="22">
    <location>
        <begin position="276"/>
        <end position="279"/>
    </location>
</feature>
<feature type="strand" evidence="22">
    <location>
        <begin position="294"/>
        <end position="296"/>
    </location>
</feature>
<feature type="strand" evidence="22">
    <location>
        <begin position="307"/>
        <end position="310"/>
    </location>
</feature>
<feature type="strand" evidence="22">
    <location>
        <begin position="313"/>
        <end position="315"/>
    </location>
</feature>
<feature type="strand" evidence="22">
    <location>
        <begin position="320"/>
        <end position="327"/>
    </location>
</feature>
<feature type="strand" evidence="22">
    <location>
        <begin position="330"/>
        <end position="339"/>
    </location>
</feature>
<feature type="strand" evidence="22">
    <location>
        <begin position="343"/>
        <end position="351"/>
    </location>
</feature>
<feature type="strand" evidence="22">
    <location>
        <begin position="354"/>
        <end position="361"/>
    </location>
</feature>
<feature type="strand" evidence="22">
    <location>
        <begin position="364"/>
        <end position="373"/>
    </location>
</feature>
<feature type="strand" evidence="24">
    <location>
        <begin position="376"/>
        <end position="378"/>
    </location>
</feature>
<feature type="strand" evidence="22">
    <location>
        <begin position="380"/>
        <end position="386"/>
    </location>
</feature>
<feature type="strand" evidence="22">
    <location>
        <begin position="388"/>
        <end position="395"/>
    </location>
</feature>
<feature type="strand" evidence="22">
    <location>
        <begin position="398"/>
        <end position="404"/>
    </location>
</feature>
<feature type="strand" evidence="22">
    <location>
        <begin position="409"/>
        <end position="413"/>
    </location>
</feature>
<feature type="strand" evidence="22">
    <location>
        <begin position="416"/>
        <end position="418"/>
    </location>
</feature>
<feature type="strand" evidence="22">
    <location>
        <begin position="420"/>
        <end position="425"/>
    </location>
</feature>
<feature type="helix" evidence="22">
    <location>
        <begin position="430"/>
        <end position="432"/>
    </location>
</feature>
<feature type="strand" evidence="22">
    <location>
        <begin position="433"/>
        <end position="435"/>
    </location>
</feature>
<feature type="strand" evidence="22">
    <location>
        <begin position="443"/>
        <end position="450"/>
    </location>
</feature>
<feature type="helix" evidence="24">
    <location>
        <begin position="457"/>
        <end position="463"/>
    </location>
</feature>
<feature type="helix" evidence="22">
    <location>
        <begin position="466"/>
        <end position="468"/>
    </location>
</feature>
<feature type="strand" evidence="22">
    <location>
        <begin position="469"/>
        <end position="473"/>
    </location>
</feature>
<feature type="strand" evidence="22">
    <location>
        <begin position="475"/>
        <end position="480"/>
    </location>
</feature>
<feature type="strand" evidence="22">
    <location>
        <begin position="486"/>
        <end position="488"/>
    </location>
</feature>
<feature type="strand" evidence="22">
    <location>
        <begin position="507"/>
        <end position="518"/>
    </location>
</feature>
<feature type="strand" evidence="22">
    <location>
        <begin position="520"/>
        <end position="527"/>
    </location>
</feature>
<feature type="helix" evidence="22">
    <location>
        <begin position="528"/>
        <end position="530"/>
    </location>
</feature>
<feature type="strand" evidence="22">
    <location>
        <begin position="532"/>
        <end position="541"/>
    </location>
</feature>
<feature type="strand" evidence="23">
    <location>
        <begin position="545"/>
        <end position="547"/>
    </location>
</feature>
<feature type="strand" evidence="22">
    <location>
        <begin position="552"/>
        <end position="557"/>
    </location>
</feature>
<feature type="strand" evidence="22">
    <location>
        <begin position="560"/>
        <end position="566"/>
    </location>
</feature>
<feature type="helix" evidence="24">
    <location>
        <begin position="569"/>
        <end position="571"/>
    </location>
</feature>
<feature type="strand" evidence="22">
    <location>
        <begin position="575"/>
        <end position="582"/>
    </location>
</feature>
<feature type="strand" evidence="22">
    <location>
        <begin position="585"/>
        <end position="590"/>
    </location>
</feature>
<feature type="strand" evidence="22">
    <location>
        <begin position="596"/>
        <end position="599"/>
    </location>
</feature>
<feature type="helix" evidence="22">
    <location>
        <begin position="601"/>
        <end position="615"/>
    </location>
</feature>
<feature type="strand" evidence="22">
    <location>
        <begin position="620"/>
        <end position="624"/>
    </location>
</feature>
<feature type="strand" evidence="22">
    <location>
        <begin position="633"/>
        <end position="635"/>
    </location>
</feature>
<feature type="strand" evidence="22">
    <location>
        <begin position="642"/>
        <end position="648"/>
    </location>
</feature>
<feature type="helix" evidence="22">
    <location>
        <begin position="655"/>
        <end position="657"/>
    </location>
</feature>
<feature type="strand" evidence="22">
    <location>
        <begin position="658"/>
        <end position="661"/>
    </location>
</feature>
<feature type="strand" evidence="24">
    <location>
        <begin position="665"/>
        <end position="668"/>
    </location>
</feature>
<name>GAS6_HUMAN</name>
<protein>
    <recommendedName>
        <fullName evidence="20">Growth arrest-specific protein 6</fullName>
        <shortName>GAS-6</shortName>
    </recommendedName>
    <alternativeName>
        <fullName>AXL receptor tyrosine kinase ligand</fullName>
    </alternativeName>
</protein>
<sequence length="678" mass="74925">MAPSLSPGPAALRRAPQLLLLLLAAECALAALLPAREATQFLRPRQRRAFQVFEEAKQGHLERECVEELCSREEAREVFENDPETDYFYPRYLDCINKYGSPYTKNSGFATCVQNLPDQCTPNPCDRKGTQACQDLMGNFFCLCKAGWGGRLCDKDVNECSQENGGCLQICHNKPGSFHCSCHSGFELSSDGRTCQDIDECADSEACGEARCKNLPGSYSCLCDEGFAYSSQEKACRDVDECLQGRCEQVCVNSPGSYTCHCDGRGGLKLSQDMDTCEDILPCVPFSVAKSVKSLYLGRMFSGTPVIRLRFKRLQPTRLVAEFDFRTFDPEGILLFAGGHQDSTWIVLALRAGRLELQLRYNGVGRVTSSGPVINHGMWQTISVEELARNLVIKVNRDAVMKIAVAGDLFQPERGLYHLNLTVGGIPFHEKDLVQPINPRLDGCMRSWNWLNGEDTTIQETVKVNTRMQCFSVTERGSFYPGSGFAFYSLDYMRTPLDVGTESTWEVEVVAHIRPAADTGVLFALWAPDLRAVPLSVALVDYHSTKKLKKQLVVLAVEHTALALMEIKVCDGQEHVVTVSLRDGEATLEVDGTRGQSEVSAAQLQERLAVLERHLRSPVLTFAGGLPDVPVTSAPVTAFYRGCMTLEVNRRLLDLDEAAYKHSDITAHSCPPVEPAAA</sequence>
<comment type="function">
    <text evidence="7 10">Ligand for tyrosine-protein kinase receptors AXL, TYRO3 and MER whose signaling is implicated in cell growth and survival, cell adhesion and cell migration. GAS6/AXL signaling plays a role in various processes such as endothelial cell survival during acidification by preventing apoptosis, optimal cytokine signaling during human natural killer cell development, hepatic regeneration, gonadotropin-releasing hormone neuron survival and migration, platelet activation, or regulation of thrombotic responses.</text>
</comment>
<comment type="function">
    <text evidence="9 11 12">(Microbial infection) Can bridge virus envelope phosphatidylserine to the TAM receptor tyrosine kinase Axl to mediate viral entry by apoptotic mimicry (PubMed:21501828). Plays a role in Dengue cell entry by apoptotic mimicry (PubMed:23084921). Plays a role in Vaccinia virus cell entry by apoptotic mimicry (PubMed:21501828). Plays a role in ebolavirus and marburgvirus cell entry by apoptotic mimicry (PubMed:17005688).</text>
</comment>
<comment type="subunit">
    <text evidence="8">Heterodimer and heterotetramer with AXL.</text>
</comment>
<comment type="interaction">
    <interactant intactId="EBI-21517417">
        <id>Q14393-2</id>
    </interactant>
    <interactant intactId="EBI-2850927">
        <id>P30530</id>
        <label>AXL</label>
    </interactant>
    <organismsDiffer>false</organismsDiffer>
    <experiments>8</experiments>
</comment>
<comment type="subcellular location">
    <subcellularLocation>
        <location evidence="17">Secreted</location>
    </subcellularLocation>
</comment>
<comment type="alternative products">
    <event type="alternative splicing"/>
    <isoform>
        <id>Q14393-2</id>
        <name>1</name>
        <sequence type="displayed"/>
    </isoform>
    <isoform>
        <id>Q14393-1</id>
        <name>2</name>
        <name evidence="19">gas6SV</name>
        <sequence type="described" ref="VSP_059770"/>
    </isoform>
    <isoform>
        <id>Q14393-3</id>
        <name>3</name>
        <sequence type="described" ref="VSP_059769"/>
    </isoform>
    <isoform>
        <id>Q14393-4</id>
        <name>4</name>
        <sequence type="described" ref="VSP_059768"/>
    </isoform>
    <isoform>
        <id>Q14393-5</id>
        <name>5</name>
        <sequence type="described" ref="VSP_059767"/>
    </isoform>
</comment>
<comment type="tissue specificity">
    <text evidence="14 16">Plasma. Isoform 1 and isoform 2 are widely expressed, isoform 1 being expressed at higher levels than isoform 2 in most tissues. Isoform 2 is the predominant form in spleen.</text>
</comment>
<comment type="PTM">
    <molecule>Isoform 2</molecule>
    <text evidence="17">Proteolytically processed after secretion to yield a N-terminal 36 kDa protein and a C-terminal 50 kDa protein including the laminin G-like domains which activates AXL.</text>
</comment>
<comment type="PTM">
    <text evidence="6">Gamma-carboxyglutamate residues are formed by vitamin K dependent carboxylation. These residues are essential for the binding of calcium.</text>
</comment>